<sequence length="1581" mass="176664">MEAEEPEYGVSTEVPDIEELKTIPEGIMRSSQIPALDPEAQEDRDPSYKWTDGHRPVMNQSKVLRDMGDHTPNSMAIFFKKESSDMETSQEILLAEACNTPDQQEAVIQSLKDRLSRTIAAPELLACAVQEEWLDIPSKLDNRVGAELQSELMSLTLAVSKEKEEEETSPDTSIPRGSWPPCKTHPGETEQTQGSGSELLRQGKQLQLEATQENQGQEGFLQSQEAQGLEEQEGQEVEIQEEGTLNEGICFGGLLGEQEEVEEGFNGNEEEQKQGQIQSYMLLGGQWENEGLSGELEGLNYSERGQENRERRVWVLRDSEEEGQDQESREVEERRVATQYTENQRLVEKSEIVKRKQRDHDQTGKVMPVRDQKEVVDSGDRVQGNGDSGGQTAVEGSRPGEDSKPSLPVASVDPEVLSPGTLFPGISSSVADIPQIQKEPVCEELSPQAPALEPTEWSHQPISPPASFAPEESLDNRTHNSQQEEFRLRKGIEVVSASTSVAPSGTRDSPPFSPPNVFSSTATLSPVSSSVILPEETPTASASADTPHHCGPCETPPLPAKSSRYPCATSDTANPHSPLSSYTGVTQHLRSNSFPGSHRTEQTPDSLGMSLSFSHLELPQRPPKPAIYGSLTPRRNRRSRDGIVFSDSSTALFALKQDSEEFTSNPERPSSPHGSPTWGSPQNSAFAIGSPANVSSPPTVSMDMTIREALLPIPPEKRHSYSHIVERDGLLHEVASTLKRHSHPPPLTLSSGLHRSSKGSFSLVPDSTVARQHRPLPSTPESPNHTQTSIPSRLRYNKPLPPTPDMPEFYHPSISSSYISRMYRPLPPVPIIDPSSEPPPLPPKSRGRSKSIQGGVIHSGGQAKPRPNNQDWTASTLSVGRTSWPPATGRSTESLPLTSRCNNEVSPGLAFSNMTNLLSPSSPTTPWIPDLQRPTTKDESGLTEESEPPVRGSFRRSAPQEEFNNTRRSALGSRKNSEKPLHHQLEKASSWPHRRDPARTSESSSEQVVLGQVPNKQKGWNRQGLRRPSILPESSSDLRNPAAGRLPGSSDSVVFREKKPKEGMGGFSRRCSKLISSQLLYQEYSDVVLNKEIQSQQRLDSLAEPHGLSSPRHRRKALVSSDSYLQRLSMASSGSLWQEIPVVRNSTVLLSMTHEDQKLQEAKFELIVSEASYLRSLNIAVDHFQHSAQLRGTLSNQDHQWLFSRLQDVRDVSTTFLSDLEENFENNIFSFQVCDVVLNHAADFHRVYLPYVTNQTYQERTFQSLMNSNSSFREVLEKLESDPICQRLSLKSFLILPFQRITRLKLLLQNILKRTQPGSSEEAEATKAHHALEKLIRDCNSNVQRMRRTEELIYLSQKIEFECKIFPLISQSRWLVKSGELTALEFSVSPGLRRKLTTRPVHLHLFNDCLLLSRPREGSRFLVFDHAPFSSIRGEKCEMKLHGPHKNLFRLFLLHNAQGTQVEFLFRTETQSEKLRWISALAMPREELDLLECYDSPQVQCLRAYKPRENDELALEKADVVMVTQQSSDGWLEGVRLSDGEQGWFPVQQVEFISNPEVRAQNLKEAHRVKTAKLQLVEQQV</sequence>
<organism>
    <name type="scientific">Mus musculus</name>
    <name type="common">Mouse</name>
    <dbReference type="NCBI Taxonomy" id="10090"/>
    <lineage>
        <taxon>Eukaryota</taxon>
        <taxon>Metazoa</taxon>
        <taxon>Chordata</taxon>
        <taxon>Craniata</taxon>
        <taxon>Vertebrata</taxon>
        <taxon>Euteleostomi</taxon>
        <taxon>Mammalia</taxon>
        <taxon>Eutheria</taxon>
        <taxon>Euarchontoglires</taxon>
        <taxon>Glires</taxon>
        <taxon>Rodentia</taxon>
        <taxon>Myomorpha</taxon>
        <taxon>Muroidea</taxon>
        <taxon>Muridae</taxon>
        <taxon>Murinae</taxon>
        <taxon>Mus</taxon>
        <taxon>Mus</taxon>
    </lineage>
</organism>
<evidence type="ECO:0000250" key="1">
    <source>
        <dbReference type="UniProtKB" id="Q12774"/>
    </source>
</evidence>
<evidence type="ECO:0000255" key="2"/>
<evidence type="ECO:0000255" key="3">
    <source>
        <dbReference type="PROSITE-ProRule" id="PRU00062"/>
    </source>
</evidence>
<evidence type="ECO:0000255" key="4">
    <source>
        <dbReference type="PROSITE-ProRule" id="PRU00192"/>
    </source>
</evidence>
<evidence type="ECO:0000256" key="5">
    <source>
        <dbReference type="SAM" id="MobiDB-lite"/>
    </source>
</evidence>
<evidence type="ECO:0000269" key="6">
    <source>
    </source>
</evidence>
<evidence type="ECO:0000269" key="7">
    <source>
    </source>
</evidence>
<evidence type="ECO:0000305" key="8"/>
<evidence type="ECO:0000312" key="9">
    <source>
        <dbReference type="MGI" id="MGI:1858952"/>
    </source>
</evidence>
<evidence type="ECO:0000312" key="10">
    <source>
        <dbReference type="Proteomes" id="UP000000589"/>
    </source>
</evidence>
<evidence type="ECO:0007744" key="11">
    <source>
    </source>
</evidence>
<accession>E9Q7D5</accession>
<accession>Q8R172</accession>
<accession>Q922T1</accession>
<gene>
    <name evidence="9" type="primary">Arhgef5</name>
</gene>
<protein>
    <recommendedName>
        <fullName evidence="9">Rho guanine nucleotide exchange factor 5</fullName>
    </recommendedName>
</protein>
<comment type="function">
    <text evidence="1 6 7">Guanine nucleotide exchange factor which activates Rho GTPases (PubMed:19713215, PubMed:21525037). Strongly activates RHOA (PubMed:19713215, PubMed:21525037). Also strongly activates RHOB, weakly activates RHOC and RHOG and shows no effect on RHOD, RHOV, RHOQ or RAC1 (PubMed:19713215). Involved in regulation of cell shape and actin cytoskeletal organization (PubMed:21525037). Plays a role in actin organization by generating a loss of actin stress fibers and the formation of membrane ruffles and filopodia (By similarity). Required for SRC-induced podosome formation (PubMed:21525037). Involved in positive regulation of immature dendritic cell migration (PubMed:19713215).</text>
</comment>
<comment type="subunit">
    <text evidence="1 6 7">Interacts with SRC (PubMed:21525037). Forms a ternary complex with SRC and the PI3K 85 kDa subunit (PubMed:21525037). Interacts with and is activated by the heterodimer formed by GNB1 and GNG2 (PubMed:19713215). Interacts with ODAM (via C-terminus) (By similarity). Interacts with RHOA (PubMed:19713215).</text>
</comment>
<comment type="subcellular location">
    <subcellularLocation>
        <location evidence="1">Nucleus</location>
    </subcellularLocation>
    <subcellularLocation>
        <location evidence="1">Cytoplasm</location>
    </subcellularLocation>
    <subcellularLocation>
        <location evidence="7">Cell projection</location>
        <location evidence="7">Podosome</location>
    </subcellularLocation>
</comment>
<comment type="domain">
    <text evidence="7">The PH domain binds to phosphoinositides and is essential for podosome formation.</text>
</comment>
<comment type="PTM">
    <text evidence="7">Activation of SRC induces tyrosine phosphorylation of ARHGEF5.</text>
</comment>
<comment type="disruption phenotype">
    <text evidence="6">Chemotaxis of macrophages, T and B lymphocytes and bone marrow-derived mature dendritic cells from mutant mice is not affected but chemotaxis of immature dendritic cells is abolished.</text>
</comment>
<dbReference type="EMBL" id="AC153885">
    <property type="status" value="NOT_ANNOTATED_CDS"/>
    <property type="molecule type" value="Genomic_DNA"/>
</dbReference>
<dbReference type="EMBL" id="AC158671">
    <property type="status" value="NOT_ANNOTATED_CDS"/>
    <property type="molecule type" value="Genomic_DNA"/>
</dbReference>
<dbReference type="EMBL" id="BC006829">
    <property type="protein sequence ID" value="AAH06829.1"/>
    <property type="molecule type" value="mRNA"/>
</dbReference>
<dbReference type="EMBL" id="BC025127">
    <property type="protein sequence ID" value="AAH25127.1"/>
    <property type="molecule type" value="mRNA"/>
</dbReference>
<dbReference type="CCDS" id="CCDS51759.1"/>
<dbReference type="RefSeq" id="NP_001404551.1">
    <property type="nucleotide sequence ID" value="NM_001417622.1"/>
</dbReference>
<dbReference type="RefSeq" id="NP_598435.1">
    <property type="nucleotide sequence ID" value="NM_133674.2"/>
</dbReference>
<dbReference type="RefSeq" id="XP_006506450.1">
    <property type="nucleotide sequence ID" value="XM_006506387.2"/>
</dbReference>
<dbReference type="SMR" id="E9Q7D5"/>
<dbReference type="FunCoup" id="E9Q7D5">
    <property type="interactions" value="434"/>
</dbReference>
<dbReference type="STRING" id="10090.ENSMUSP00000031750"/>
<dbReference type="GlyGen" id="E9Q7D5">
    <property type="glycosylation" value="6 sites, 1 N-linked glycan (1 site), 1 O-linked glycan (4 sites)"/>
</dbReference>
<dbReference type="iPTMnet" id="E9Q7D5"/>
<dbReference type="PhosphoSitePlus" id="E9Q7D5"/>
<dbReference type="jPOST" id="E9Q7D5"/>
<dbReference type="PaxDb" id="10090-ENSMUSP00000031750"/>
<dbReference type="PeptideAtlas" id="E9Q7D5"/>
<dbReference type="ProteomicsDB" id="265081"/>
<dbReference type="Pumba" id="E9Q7D5"/>
<dbReference type="Antibodypedia" id="18513">
    <property type="antibodies" value="340 antibodies from 35 providers"/>
</dbReference>
<dbReference type="Ensembl" id="ENSMUST00000031750.14">
    <property type="protein sequence ID" value="ENSMUSP00000031750.7"/>
    <property type="gene ID" value="ENSMUSG00000033542.14"/>
</dbReference>
<dbReference type="GeneID" id="54324"/>
<dbReference type="KEGG" id="mmu:54324"/>
<dbReference type="UCSC" id="uc009bsn.1">
    <property type="organism name" value="mouse"/>
</dbReference>
<dbReference type="UCSC" id="uc009bso.2">
    <property type="organism name" value="mouse"/>
</dbReference>
<dbReference type="AGR" id="MGI:1858952"/>
<dbReference type="CTD" id="7984"/>
<dbReference type="MGI" id="MGI:1858952">
    <property type="gene designation" value="Arhgef5"/>
</dbReference>
<dbReference type="VEuPathDB" id="HostDB:ENSMUSG00000033542"/>
<dbReference type="eggNOG" id="KOG3523">
    <property type="taxonomic scope" value="Eukaryota"/>
</dbReference>
<dbReference type="GeneTree" id="ENSGT01030000234571"/>
<dbReference type="HOGENOM" id="CLU_003633_0_0_1"/>
<dbReference type="InParanoid" id="E9Q7D5"/>
<dbReference type="OMA" id="EKRHVHP"/>
<dbReference type="OrthoDB" id="27593at2759"/>
<dbReference type="PhylomeDB" id="E9Q7D5"/>
<dbReference type="TreeFam" id="TF342609"/>
<dbReference type="Reactome" id="R-MMU-193648">
    <property type="pathway name" value="NRAGE signals death through JNK"/>
</dbReference>
<dbReference type="Reactome" id="R-MMU-416482">
    <property type="pathway name" value="G alpha (12/13) signalling events"/>
</dbReference>
<dbReference type="Reactome" id="R-MMU-8980692">
    <property type="pathway name" value="RHOA GTPase cycle"/>
</dbReference>
<dbReference type="Reactome" id="R-MMU-9013026">
    <property type="pathway name" value="RHOB GTPase cycle"/>
</dbReference>
<dbReference type="Reactome" id="R-MMU-9013106">
    <property type="pathway name" value="RHOC GTPase cycle"/>
</dbReference>
<dbReference type="Reactome" id="R-MMU-9013148">
    <property type="pathway name" value="CDC42 GTPase cycle"/>
</dbReference>
<dbReference type="Reactome" id="R-MMU-9013149">
    <property type="pathway name" value="RAC1 GTPase cycle"/>
</dbReference>
<dbReference type="Reactome" id="R-MMU-9013408">
    <property type="pathway name" value="RHOG GTPase cycle"/>
</dbReference>
<dbReference type="BioGRID-ORCS" id="54324">
    <property type="hits" value="6 hits in 76 CRISPR screens"/>
</dbReference>
<dbReference type="ChiTaRS" id="Arhgef5">
    <property type="organism name" value="mouse"/>
</dbReference>
<dbReference type="PRO" id="PR:E9Q7D5"/>
<dbReference type="Proteomes" id="UP000000589">
    <property type="component" value="Chromosome 6"/>
</dbReference>
<dbReference type="RNAct" id="E9Q7D5">
    <property type="molecule type" value="protein"/>
</dbReference>
<dbReference type="Bgee" id="ENSMUSG00000033542">
    <property type="expression patterns" value="Expressed in placenta labyrinth and 194 other cell types or tissues"/>
</dbReference>
<dbReference type="ExpressionAtlas" id="E9Q7D5">
    <property type="expression patterns" value="baseline and differential"/>
</dbReference>
<dbReference type="GO" id="GO:0070161">
    <property type="term" value="C:anchoring junction"/>
    <property type="evidence" value="ECO:0007669"/>
    <property type="project" value="UniProtKB-KW"/>
</dbReference>
<dbReference type="GO" id="GO:0042995">
    <property type="term" value="C:cell projection"/>
    <property type="evidence" value="ECO:0007669"/>
    <property type="project" value="UniProtKB-KW"/>
</dbReference>
<dbReference type="GO" id="GO:0005829">
    <property type="term" value="C:cytosol"/>
    <property type="evidence" value="ECO:0007669"/>
    <property type="project" value="Ensembl"/>
</dbReference>
<dbReference type="GO" id="GO:0005654">
    <property type="term" value="C:nucleoplasm"/>
    <property type="evidence" value="ECO:0007669"/>
    <property type="project" value="Ensembl"/>
</dbReference>
<dbReference type="GO" id="GO:0005886">
    <property type="term" value="C:plasma membrane"/>
    <property type="evidence" value="ECO:0007669"/>
    <property type="project" value="Ensembl"/>
</dbReference>
<dbReference type="GO" id="GO:0002102">
    <property type="term" value="C:podosome"/>
    <property type="evidence" value="ECO:0007669"/>
    <property type="project" value="UniProtKB-SubCell"/>
</dbReference>
<dbReference type="GO" id="GO:0005085">
    <property type="term" value="F:guanyl-nucleotide exchange factor activity"/>
    <property type="evidence" value="ECO:0007669"/>
    <property type="project" value="UniProtKB-KW"/>
</dbReference>
<dbReference type="GO" id="GO:0008289">
    <property type="term" value="F:lipid binding"/>
    <property type="evidence" value="ECO:0007669"/>
    <property type="project" value="UniProtKB-KW"/>
</dbReference>
<dbReference type="GO" id="GO:0030036">
    <property type="term" value="P:actin cytoskeleton organization"/>
    <property type="evidence" value="ECO:0000314"/>
    <property type="project" value="MGI"/>
</dbReference>
<dbReference type="GO" id="GO:0061484">
    <property type="term" value="P:hematopoietic stem cell homeostasis"/>
    <property type="evidence" value="ECO:0000315"/>
    <property type="project" value="MGI"/>
</dbReference>
<dbReference type="GO" id="GO:0035556">
    <property type="term" value="P:intracellular signal transduction"/>
    <property type="evidence" value="ECO:0007669"/>
    <property type="project" value="InterPro"/>
</dbReference>
<dbReference type="GO" id="GO:0002408">
    <property type="term" value="P:myeloid dendritic cell chemotaxis"/>
    <property type="evidence" value="ECO:0000315"/>
    <property type="project" value="MGI"/>
</dbReference>
<dbReference type="GO" id="GO:0071803">
    <property type="term" value="P:positive regulation of podosome assembly"/>
    <property type="evidence" value="ECO:0000316"/>
    <property type="project" value="MGI"/>
</dbReference>
<dbReference type="GO" id="GO:1904591">
    <property type="term" value="P:positive regulation of protein import"/>
    <property type="evidence" value="ECO:0007669"/>
    <property type="project" value="Ensembl"/>
</dbReference>
<dbReference type="GO" id="GO:0051496">
    <property type="term" value="P:positive regulation of stress fiber assembly"/>
    <property type="evidence" value="ECO:0007669"/>
    <property type="project" value="Ensembl"/>
</dbReference>
<dbReference type="CDD" id="cd01221">
    <property type="entry name" value="PH_ephexin"/>
    <property type="match status" value="1"/>
</dbReference>
<dbReference type="CDD" id="cd00160">
    <property type="entry name" value="RhoGEF"/>
    <property type="match status" value="1"/>
</dbReference>
<dbReference type="CDD" id="cd11940">
    <property type="entry name" value="SH3_ARHGEF5_19"/>
    <property type="match status" value="1"/>
</dbReference>
<dbReference type="FunFam" id="2.30.29.30:FF:000205">
    <property type="entry name" value="Rho guanine nucleotide exchange factor (GEF) 19"/>
    <property type="match status" value="1"/>
</dbReference>
<dbReference type="FunFam" id="2.30.30.40:FF:000111">
    <property type="entry name" value="Rho guanine nucleotide exchange factor (GEF) 5"/>
    <property type="match status" value="1"/>
</dbReference>
<dbReference type="FunFam" id="1.20.900.10:FF:000007">
    <property type="entry name" value="rho guanine nucleotide exchange factor 19"/>
    <property type="match status" value="1"/>
</dbReference>
<dbReference type="Gene3D" id="1.20.900.10">
    <property type="entry name" value="Dbl homology (DH) domain"/>
    <property type="match status" value="1"/>
</dbReference>
<dbReference type="Gene3D" id="2.30.29.30">
    <property type="entry name" value="Pleckstrin-homology domain (PH domain)/Phosphotyrosine-binding domain (PTB)"/>
    <property type="match status" value="1"/>
</dbReference>
<dbReference type="Gene3D" id="2.30.30.40">
    <property type="entry name" value="SH3 Domains"/>
    <property type="match status" value="1"/>
</dbReference>
<dbReference type="InterPro" id="IPR029212">
    <property type="entry name" value="ARHGEF5/35_N"/>
</dbReference>
<dbReference type="InterPro" id="IPR035899">
    <property type="entry name" value="DBL_dom_sf"/>
</dbReference>
<dbReference type="InterPro" id="IPR000219">
    <property type="entry name" value="DH_dom"/>
</dbReference>
<dbReference type="InterPro" id="IPR047271">
    <property type="entry name" value="Ephexin-like"/>
</dbReference>
<dbReference type="InterPro" id="IPR001331">
    <property type="entry name" value="GDS_CDC24_CS"/>
</dbReference>
<dbReference type="InterPro" id="IPR011993">
    <property type="entry name" value="PH-like_dom_sf"/>
</dbReference>
<dbReference type="InterPro" id="IPR001849">
    <property type="entry name" value="PH_domain"/>
</dbReference>
<dbReference type="InterPro" id="IPR047270">
    <property type="entry name" value="PH_ephexin"/>
</dbReference>
<dbReference type="InterPro" id="IPR036028">
    <property type="entry name" value="SH3-like_dom_sf"/>
</dbReference>
<dbReference type="InterPro" id="IPR001452">
    <property type="entry name" value="SH3_domain"/>
</dbReference>
<dbReference type="PANTHER" id="PTHR12845:SF2">
    <property type="entry name" value="DH DOMAIN-CONTAINING PROTEIN-RELATED"/>
    <property type="match status" value="1"/>
</dbReference>
<dbReference type="PANTHER" id="PTHR12845">
    <property type="entry name" value="GUANINE NUCLEOTIDE EXCHANGE FACTOR"/>
    <property type="match status" value="1"/>
</dbReference>
<dbReference type="Pfam" id="PF15441">
    <property type="entry name" value="ARHGEF5_35"/>
    <property type="match status" value="1"/>
</dbReference>
<dbReference type="Pfam" id="PF00169">
    <property type="entry name" value="PH"/>
    <property type="match status" value="1"/>
</dbReference>
<dbReference type="Pfam" id="PF00621">
    <property type="entry name" value="RhoGEF"/>
    <property type="match status" value="1"/>
</dbReference>
<dbReference type="Pfam" id="PF00018">
    <property type="entry name" value="SH3_1"/>
    <property type="match status" value="1"/>
</dbReference>
<dbReference type="SMART" id="SM00233">
    <property type="entry name" value="PH"/>
    <property type="match status" value="1"/>
</dbReference>
<dbReference type="SMART" id="SM00325">
    <property type="entry name" value="RhoGEF"/>
    <property type="match status" value="1"/>
</dbReference>
<dbReference type="SMART" id="SM00326">
    <property type="entry name" value="SH3"/>
    <property type="match status" value="1"/>
</dbReference>
<dbReference type="SUPFAM" id="SSF48065">
    <property type="entry name" value="DBL homology domain (DH-domain)"/>
    <property type="match status" value="1"/>
</dbReference>
<dbReference type="SUPFAM" id="SSF50729">
    <property type="entry name" value="PH domain-like"/>
    <property type="match status" value="1"/>
</dbReference>
<dbReference type="SUPFAM" id="SSF50044">
    <property type="entry name" value="SH3-domain"/>
    <property type="match status" value="1"/>
</dbReference>
<dbReference type="PROSITE" id="PS00741">
    <property type="entry name" value="DH_1"/>
    <property type="match status" value="1"/>
</dbReference>
<dbReference type="PROSITE" id="PS50010">
    <property type="entry name" value="DH_2"/>
    <property type="match status" value="1"/>
</dbReference>
<dbReference type="PROSITE" id="PS50002">
    <property type="entry name" value="SH3"/>
    <property type="match status" value="1"/>
</dbReference>
<keyword id="KW-0965">Cell junction</keyword>
<keyword id="KW-0966">Cell projection</keyword>
<keyword id="KW-0963">Cytoplasm</keyword>
<keyword id="KW-0344">Guanine-nucleotide releasing factor</keyword>
<keyword id="KW-0446">Lipid-binding</keyword>
<keyword id="KW-0539">Nucleus</keyword>
<keyword id="KW-0597">Phosphoprotein</keyword>
<keyword id="KW-1185">Reference proteome</keyword>
<keyword id="KW-0728">SH3 domain</keyword>
<proteinExistence type="evidence at protein level"/>
<feature type="chain" id="PRO_0000435143" description="Rho guanine nucleotide exchange factor 5">
    <location>
        <begin position="1"/>
        <end position="1581"/>
    </location>
</feature>
<feature type="domain" description="DH" evidence="3">
    <location>
        <begin position="1158"/>
        <end position="1342"/>
    </location>
</feature>
<feature type="domain" description="PH" evidence="2">
    <location>
        <begin position="1375"/>
        <end position="1488"/>
    </location>
</feature>
<feature type="domain" description="SH3" evidence="4">
    <location>
        <begin position="1494"/>
        <end position="1555"/>
    </location>
</feature>
<feature type="region of interest" description="Disordered" evidence="5">
    <location>
        <begin position="25"/>
        <end position="54"/>
    </location>
</feature>
<feature type="region of interest" description="Disordered" evidence="5">
    <location>
        <begin position="159"/>
        <end position="274"/>
    </location>
</feature>
<feature type="region of interest" description="Disordered" evidence="5">
    <location>
        <begin position="316"/>
        <end position="643"/>
    </location>
</feature>
<feature type="region of interest" description="Disordered" evidence="5">
    <location>
        <begin position="659"/>
        <end position="700"/>
    </location>
</feature>
<feature type="region of interest" description="Disordered" evidence="5">
    <location>
        <begin position="741"/>
        <end position="810"/>
    </location>
</feature>
<feature type="region of interest" description="Disordered" evidence="5">
    <location>
        <begin position="829"/>
        <end position="1051"/>
    </location>
</feature>
<feature type="compositionally biased region" description="Basic and acidic residues" evidence="5">
    <location>
        <begin position="41"/>
        <end position="54"/>
    </location>
</feature>
<feature type="compositionally biased region" description="Polar residues" evidence="5">
    <location>
        <begin position="204"/>
        <end position="221"/>
    </location>
</feature>
<feature type="compositionally biased region" description="Acidic residues" evidence="5">
    <location>
        <begin position="228"/>
        <end position="241"/>
    </location>
</feature>
<feature type="compositionally biased region" description="Basic and acidic residues" evidence="5">
    <location>
        <begin position="326"/>
        <end position="336"/>
    </location>
</feature>
<feature type="compositionally biased region" description="Basic and acidic residues" evidence="5">
    <location>
        <begin position="345"/>
        <end position="380"/>
    </location>
</feature>
<feature type="compositionally biased region" description="Basic and acidic residues" evidence="5">
    <location>
        <begin position="474"/>
        <end position="492"/>
    </location>
</feature>
<feature type="compositionally biased region" description="Polar residues" evidence="5">
    <location>
        <begin position="496"/>
        <end position="507"/>
    </location>
</feature>
<feature type="compositionally biased region" description="Low complexity" evidence="5">
    <location>
        <begin position="515"/>
        <end position="531"/>
    </location>
</feature>
<feature type="compositionally biased region" description="Polar residues" evidence="5">
    <location>
        <begin position="569"/>
        <end position="595"/>
    </location>
</feature>
<feature type="compositionally biased region" description="Polar residues" evidence="5">
    <location>
        <begin position="603"/>
        <end position="613"/>
    </location>
</feature>
<feature type="compositionally biased region" description="Polar residues" evidence="5">
    <location>
        <begin position="662"/>
        <end position="685"/>
    </location>
</feature>
<feature type="compositionally biased region" description="Polar residues" evidence="5">
    <location>
        <begin position="748"/>
        <end position="760"/>
    </location>
</feature>
<feature type="compositionally biased region" description="Polar residues" evidence="5">
    <location>
        <begin position="779"/>
        <end position="791"/>
    </location>
</feature>
<feature type="compositionally biased region" description="Pro residues" evidence="5">
    <location>
        <begin position="829"/>
        <end position="843"/>
    </location>
</feature>
<feature type="compositionally biased region" description="Polar residues" evidence="5">
    <location>
        <begin position="867"/>
        <end position="881"/>
    </location>
</feature>
<feature type="compositionally biased region" description="Polar residues" evidence="5">
    <location>
        <begin position="889"/>
        <end position="905"/>
    </location>
</feature>
<feature type="compositionally biased region" description="Polar residues" evidence="5">
    <location>
        <begin position="912"/>
        <end position="925"/>
    </location>
</feature>
<feature type="compositionally biased region" description="Basic and acidic residues" evidence="5">
    <location>
        <begin position="975"/>
        <end position="986"/>
    </location>
</feature>
<feature type="modified residue" description="Phosphoserine" evidence="1">
    <location>
        <position position="446"/>
    </location>
</feature>
<feature type="modified residue" description="Phosphoserine" evidence="11">
    <location>
        <position position="953"/>
    </location>
</feature>
<feature type="modified residue" description="Phosphoserine" evidence="1">
    <location>
        <position position="969"/>
    </location>
</feature>
<feature type="modified residue" description="Phosphoserine" evidence="1">
    <location>
        <position position="1029"/>
    </location>
</feature>
<feature type="modified residue" description="Phosphoserine" evidence="11">
    <location>
        <position position="1110"/>
    </location>
</feature>
<name>ARHG5_MOUSE</name>
<reference evidence="10" key="1">
    <citation type="journal article" date="2009" name="PLoS Biol.">
        <title>Lineage-specific biology revealed by a finished genome assembly of the mouse.</title>
        <authorList>
            <person name="Church D.M."/>
            <person name="Goodstadt L."/>
            <person name="Hillier L.W."/>
            <person name="Zody M.C."/>
            <person name="Goldstein S."/>
            <person name="She X."/>
            <person name="Bult C.J."/>
            <person name="Agarwala R."/>
            <person name="Cherry J.L."/>
            <person name="DiCuccio M."/>
            <person name="Hlavina W."/>
            <person name="Kapustin Y."/>
            <person name="Meric P."/>
            <person name="Maglott D."/>
            <person name="Birtle Z."/>
            <person name="Marques A.C."/>
            <person name="Graves T."/>
            <person name="Zhou S."/>
            <person name="Teague B."/>
            <person name="Potamousis K."/>
            <person name="Churas C."/>
            <person name="Place M."/>
            <person name="Herschleb J."/>
            <person name="Runnheim R."/>
            <person name="Forrest D."/>
            <person name="Amos-Landgraf J."/>
            <person name="Schwartz D.C."/>
            <person name="Cheng Z."/>
            <person name="Lindblad-Toh K."/>
            <person name="Eichler E.E."/>
            <person name="Ponting C.P."/>
        </authorList>
    </citation>
    <scope>NUCLEOTIDE SEQUENCE [LARGE SCALE GENOMIC DNA]</scope>
    <source>
        <strain evidence="10">C57BL/6J</strain>
    </source>
</reference>
<reference evidence="8" key="2">
    <citation type="journal article" date="2004" name="Genome Res.">
        <title>The status, quality, and expansion of the NIH full-length cDNA project: the Mammalian Gene Collection (MGC).</title>
        <authorList>
            <consortium name="The MGC Project Team"/>
        </authorList>
    </citation>
    <scope>NUCLEOTIDE SEQUENCE [LARGE SCALE MRNA] OF 1167-1581</scope>
    <source>
        <strain>FVB/N</strain>
        <tissue>Mammary tumor</tissue>
        <tissue>Salivary gland</tissue>
    </source>
</reference>
<reference evidence="8" key="3">
    <citation type="journal article" date="2009" name="J. Biol. Chem.">
        <title>Regulation of immature dendritic cell migration by RhoA guanine nucleotide exchange factor Arhgef5.</title>
        <authorList>
            <person name="Wang Z."/>
            <person name="Kumamoto Y."/>
            <person name="Wang P."/>
            <person name="Gan X."/>
            <person name="Lehmann D."/>
            <person name="Smrcka A.V."/>
            <person name="Cohn L."/>
            <person name="Iwasaki A."/>
            <person name="Li L."/>
            <person name="Wu D."/>
        </authorList>
    </citation>
    <scope>FUNCTION</scope>
    <scope>INTERACTION WITH GNB1; GNG2 AND RHOA</scope>
    <scope>DISRUPTION PHENOTYPE</scope>
</reference>
<reference key="4">
    <citation type="journal article" date="2010" name="Cell">
        <title>A tissue-specific atlas of mouse protein phosphorylation and expression.</title>
        <authorList>
            <person name="Huttlin E.L."/>
            <person name="Jedrychowski M.P."/>
            <person name="Elias J.E."/>
            <person name="Goswami T."/>
            <person name="Rad R."/>
            <person name="Beausoleil S.A."/>
            <person name="Villen J."/>
            <person name="Haas W."/>
            <person name="Sowa M.E."/>
            <person name="Gygi S.P."/>
        </authorList>
    </citation>
    <scope>PHOSPHORYLATION [LARGE SCALE ANALYSIS] AT SER-953 AND SER-1110</scope>
    <scope>IDENTIFICATION BY MASS SPECTROMETRY [LARGE SCALE ANALYSIS]</scope>
    <source>
        <tissue>Brown adipose tissue</tissue>
        <tissue>Heart</tissue>
        <tissue>Kidney</tissue>
        <tissue>Lung</tissue>
        <tissue>Spleen</tissue>
    </source>
</reference>
<reference evidence="8" key="5">
    <citation type="journal article" date="2011" name="J. Cell Sci.">
        <title>The guanine nucleotide exchange factor Arhgef5 plays crucial roles in Src-induced podosome formation.</title>
        <authorList>
            <person name="Kuroiwa M."/>
            <person name="Oneyama C."/>
            <person name="Nada S."/>
            <person name="Okada M."/>
        </authorList>
    </citation>
    <scope>FUNCTION</scope>
    <scope>INTERACTION WITH SRC</scope>
    <scope>SUBCELLULAR LOCATION</scope>
    <scope>DOMAIN</scope>
    <scope>PHOSPHORYLATION</scope>
</reference>